<protein>
    <recommendedName>
        <fullName evidence="1">Uridylate kinase</fullName>
        <shortName evidence="1">UK</shortName>
        <ecNumber evidence="1">2.7.4.22</ecNumber>
    </recommendedName>
    <alternativeName>
        <fullName evidence="1">Uridine monophosphate kinase</fullName>
        <shortName evidence="1">UMP kinase</shortName>
        <shortName evidence="1">UMPK</shortName>
    </alternativeName>
</protein>
<evidence type="ECO:0000255" key="1">
    <source>
        <dbReference type="HAMAP-Rule" id="MF_01220"/>
    </source>
</evidence>
<accession>Q2W4C5</accession>
<dbReference type="EC" id="2.7.4.22" evidence="1"/>
<dbReference type="EMBL" id="AP007255">
    <property type="protein sequence ID" value="BAE51300.1"/>
    <property type="molecule type" value="Genomic_DNA"/>
</dbReference>
<dbReference type="RefSeq" id="WP_011384877.1">
    <property type="nucleotide sequence ID" value="NC_007626.1"/>
</dbReference>
<dbReference type="SMR" id="Q2W4C5"/>
<dbReference type="STRING" id="342108.amb2496"/>
<dbReference type="KEGG" id="mag:amb2496"/>
<dbReference type="HOGENOM" id="CLU_033861_0_0_5"/>
<dbReference type="OrthoDB" id="9807458at2"/>
<dbReference type="UniPathway" id="UPA00159">
    <property type="reaction ID" value="UER00275"/>
</dbReference>
<dbReference type="Proteomes" id="UP000007058">
    <property type="component" value="Chromosome"/>
</dbReference>
<dbReference type="GO" id="GO:0005829">
    <property type="term" value="C:cytosol"/>
    <property type="evidence" value="ECO:0007669"/>
    <property type="project" value="TreeGrafter"/>
</dbReference>
<dbReference type="GO" id="GO:0005524">
    <property type="term" value="F:ATP binding"/>
    <property type="evidence" value="ECO:0007669"/>
    <property type="project" value="UniProtKB-KW"/>
</dbReference>
<dbReference type="GO" id="GO:0033862">
    <property type="term" value="F:UMP kinase activity"/>
    <property type="evidence" value="ECO:0007669"/>
    <property type="project" value="UniProtKB-EC"/>
</dbReference>
<dbReference type="GO" id="GO:0044210">
    <property type="term" value="P:'de novo' CTP biosynthetic process"/>
    <property type="evidence" value="ECO:0007669"/>
    <property type="project" value="UniProtKB-UniRule"/>
</dbReference>
<dbReference type="GO" id="GO:0006225">
    <property type="term" value="P:UDP biosynthetic process"/>
    <property type="evidence" value="ECO:0007669"/>
    <property type="project" value="TreeGrafter"/>
</dbReference>
<dbReference type="CDD" id="cd04254">
    <property type="entry name" value="AAK_UMPK-PyrH-Ec"/>
    <property type="match status" value="1"/>
</dbReference>
<dbReference type="FunFam" id="3.40.1160.10:FF:000001">
    <property type="entry name" value="Uridylate kinase"/>
    <property type="match status" value="1"/>
</dbReference>
<dbReference type="Gene3D" id="3.40.1160.10">
    <property type="entry name" value="Acetylglutamate kinase-like"/>
    <property type="match status" value="1"/>
</dbReference>
<dbReference type="HAMAP" id="MF_01220_B">
    <property type="entry name" value="PyrH_B"/>
    <property type="match status" value="1"/>
</dbReference>
<dbReference type="InterPro" id="IPR036393">
    <property type="entry name" value="AceGlu_kinase-like_sf"/>
</dbReference>
<dbReference type="InterPro" id="IPR001048">
    <property type="entry name" value="Asp/Glu/Uridylate_kinase"/>
</dbReference>
<dbReference type="InterPro" id="IPR011817">
    <property type="entry name" value="Uridylate_kinase"/>
</dbReference>
<dbReference type="InterPro" id="IPR015963">
    <property type="entry name" value="Uridylate_kinase_bac"/>
</dbReference>
<dbReference type="NCBIfam" id="TIGR02075">
    <property type="entry name" value="pyrH_bact"/>
    <property type="match status" value="1"/>
</dbReference>
<dbReference type="PANTHER" id="PTHR42833">
    <property type="entry name" value="URIDYLATE KINASE"/>
    <property type="match status" value="1"/>
</dbReference>
<dbReference type="PANTHER" id="PTHR42833:SF4">
    <property type="entry name" value="URIDYLATE KINASE PUMPKIN, CHLOROPLASTIC"/>
    <property type="match status" value="1"/>
</dbReference>
<dbReference type="Pfam" id="PF00696">
    <property type="entry name" value="AA_kinase"/>
    <property type="match status" value="1"/>
</dbReference>
<dbReference type="PIRSF" id="PIRSF005650">
    <property type="entry name" value="Uridylate_kin"/>
    <property type="match status" value="1"/>
</dbReference>
<dbReference type="SUPFAM" id="SSF53633">
    <property type="entry name" value="Carbamate kinase-like"/>
    <property type="match status" value="1"/>
</dbReference>
<reference key="1">
    <citation type="journal article" date="2005" name="DNA Res.">
        <title>Complete genome sequence of the facultative anaerobic magnetotactic bacterium Magnetospirillum sp. strain AMB-1.</title>
        <authorList>
            <person name="Matsunaga T."/>
            <person name="Okamura Y."/>
            <person name="Fukuda Y."/>
            <person name="Wahyudi A.T."/>
            <person name="Murase Y."/>
            <person name="Takeyama H."/>
        </authorList>
    </citation>
    <scope>NUCLEOTIDE SEQUENCE [LARGE SCALE GENOMIC DNA]</scope>
    <source>
        <strain>ATCC 700264 / AMB-1</strain>
    </source>
</reference>
<gene>
    <name evidence="1" type="primary">pyrH</name>
    <name type="ordered locus">amb2496</name>
</gene>
<name>PYRH_PARM1</name>
<organism>
    <name type="scientific">Paramagnetospirillum magneticum (strain ATCC 700264 / AMB-1)</name>
    <name type="common">Magnetospirillum magneticum</name>
    <dbReference type="NCBI Taxonomy" id="342108"/>
    <lineage>
        <taxon>Bacteria</taxon>
        <taxon>Pseudomonadati</taxon>
        <taxon>Pseudomonadota</taxon>
        <taxon>Alphaproteobacteria</taxon>
        <taxon>Rhodospirillales</taxon>
        <taxon>Magnetospirillaceae</taxon>
        <taxon>Paramagnetospirillum</taxon>
    </lineage>
</organism>
<comment type="function">
    <text evidence="1">Catalyzes the reversible phosphorylation of UMP to UDP.</text>
</comment>
<comment type="catalytic activity">
    <reaction evidence="1">
        <text>UMP + ATP = UDP + ADP</text>
        <dbReference type="Rhea" id="RHEA:24400"/>
        <dbReference type="ChEBI" id="CHEBI:30616"/>
        <dbReference type="ChEBI" id="CHEBI:57865"/>
        <dbReference type="ChEBI" id="CHEBI:58223"/>
        <dbReference type="ChEBI" id="CHEBI:456216"/>
        <dbReference type="EC" id="2.7.4.22"/>
    </reaction>
</comment>
<comment type="activity regulation">
    <text evidence="1">Inhibited by UTP.</text>
</comment>
<comment type="pathway">
    <text evidence="1">Pyrimidine metabolism; CTP biosynthesis via de novo pathway; UDP from UMP (UMPK route): step 1/1.</text>
</comment>
<comment type="subunit">
    <text evidence="1">Homohexamer.</text>
</comment>
<comment type="subcellular location">
    <subcellularLocation>
        <location evidence="1">Cytoplasm</location>
    </subcellularLocation>
</comment>
<comment type="similarity">
    <text evidence="1">Belongs to the UMP kinase family.</text>
</comment>
<proteinExistence type="inferred from homology"/>
<feature type="chain" id="PRO_0000323878" description="Uridylate kinase">
    <location>
        <begin position="1"/>
        <end position="240"/>
    </location>
</feature>
<feature type="binding site" evidence="1">
    <location>
        <begin position="13"/>
        <end position="16"/>
    </location>
    <ligand>
        <name>ATP</name>
        <dbReference type="ChEBI" id="CHEBI:30616"/>
    </ligand>
</feature>
<feature type="binding site" evidence="1">
    <location>
        <position position="55"/>
    </location>
    <ligand>
        <name>UMP</name>
        <dbReference type="ChEBI" id="CHEBI:57865"/>
    </ligand>
</feature>
<feature type="binding site" evidence="1">
    <location>
        <position position="56"/>
    </location>
    <ligand>
        <name>ATP</name>
        <dbReference type="ChEBI" id="CHEBI:30616"/>
    </ligand>
</feature>
<feature type="binding site" evidence="1">
    <location>
        <position position="60"/>
    </location>
    <ligand>
        <name>ATP</name>
        <dbReference type="ChEBI" id="CHEBI:30616"/>
    </ligand>
</feature>
<feature type="binding site" evidence="1">
    <location>
        <position position="75"/>
    </location>
    <ligand>
        <name>UMP</name>
        <dbReference type="ChEBI" id="CHEBI:57865"/>
    </ligand>
</feature>
<feature type="binding site" evidence="1">
    <location>
        <begin position="136"/>
        <end position="143"/>
    </location>
    <ligand>
        <name>UMP</name>
        <dbReference type="ChEBI" id="CHEBI:57865"/>
    </ligand>
</feature>
<feature type="binding site" evidence="1">
    <location>
        <position position="163"/>
    </location>
    <ligand>
        <name>ATP</name>
        <dbReference type="ChEBI" id="CHEBI:30616"/>
    </ligand>
</feature>
<feature type="binding site" evidence="1">
    <location>
        <position position="164"/>
    </location>
    <ligand>
        <name>ATP</name>
        <dbReference type="ChEBI" id="CHEBI:30616"/>
    </ligand>
</feature>
<feature type="binding site" evidence="1">
    <location>
        <position position="169"/>
    </location>
    <ligand>
        <name>ATP</name>
        <dbReference type="ChEBI" id="CHEBI:30616"/>
    </ligand>
</feature>
<feature type="binding site" evidence="1">
    <location>
        <position position="172"/>
    </location>
    <ligand>
        <name>ATP</name>
        <dbReference type="ChEBI" id="CHEBI:30616"/>
    </ligand>
</feature>
<sequence>MASDAKFRRVLLKISGEGLMGTREYGLDPETVDRIAREVKSVRDLGVEVCVVIGGGNIFRGVSGASSGMERAAADNMGMLATVINALSVQNALEKVGVETRVQSAIVMPTVCEAFIRRRAIRHLEKGRVVIFAAGTGNPFFTTDTAAALRAVEMGCDALLKATQVDGVYSADPKKVKDAVRYDRLTFNEVLARDLAVMDTSAIALCRENKVPIVVFDLHRPGAFAETVSGRGLFTIIAND</sequence>
<keyword id="KW-0067">ATP-binding</keyword>
<keyword id="KW-0963">Cytoplasm</keyword>
<keyword id="KW-0418">Kinase</keyword>
<keyword id="KW-0547">Nucleotide-binding</keyword>
<keyword id="KW-0665">Pyrimidine biosynthesis</keyword>
<keyword id="KW-0808">Transferase</keyword>